<sequence length="177" mass="20806">MNFKQYSPEELKECSMIEVVHSVLGDKRQATTFNELVQEIAQVLGLSQEQVNAKLAQFYTDLNIDGRFINLGENRWGLRSWYPYEQIDEEILPQPKPKKKRKVEEDGFDDYIEEDEDDFDDADGNADEEDDVEDLDKVLEEEDGDDDDLDDLEEDEEDDFAEEELEYDETEEEEEEL</sequence>
<comment type="function">
    <text evidence="1">Participates in both the initiation and recycling phases of transcription. In the presence of the delta subunit, RNAP displays an increased specificity of transcription, a decreased affinity for nucleic acids, and an increased efficiency of RNA synthesis because of enhanced recycling.</text>
</comment>
<comment type="subunit">
    <text evidence="1">RNAP is composed of a core of 2 alpha, a beta and a beta' subunits. The core is associated with a delta subunit and one of several sigma factors.</text>
</comment>
<comment type="similarity">
    <text evidence="1">Belongs to the RpoE family.</text>
</comment>
<proteinExistence type="inferred from homology"/>
<accession>B7IQZ2</accession>
<name>RPOE_BACC2</name>
<dbReference type="EMBL" id="CP001186">
    <property type="protein sequence ID" value="ACK96428.1"/>
    <property type="molecule type" value="Genomic_DNA"/>
</dbReference>
<dbReference type="RefSeq" id="WP_001009774.1">
    <property type="nucleotide sequence ID" value="NC_011772.1"/>
</dbReference>
<dbReference type="SMR" id="B7IQZ2"/>
<dbReference type="KEGG" id="bcg:BCG9842_B5490"/>
<dbReference type="HOGENOM" id="CLU_116648_1_0_9"/>
<dbReference type="Proteomes" id="UP000006744">
    <property type="component" value="Chromosome"/>
</dbReference>
<dbReference type="GO" id="GO:0000428">
    <property type="term" value="C:DNA-directed RNA polymerase complex"/>
    <property type="evidence" value="ECO:0007669"/>
    <property type="project" value="UniProtKB-KW"/>
</dbReference>
<dbReference type="GO" id="GO:0003899">
    <property type="term" value="F:DNA-directed RNA polymerase activity"/>
    <property type="evidence" value="ECO:0007669"/>
    <property type="project" value="UniProtKB-UniRule"/>
</dbReference>
<dbReference type="GO" id="GO:0006351">
    <property type="term" value="P:DNA-templated transcription"/>
    <property type="evidence" value="ECO:0007669"/>
    <property type="project" value="InterPro"/>
</dbReference>
<dbReference type="GO" id="GO:0006355">
    <property type="term" value="P:regulation of DNA-templated transcription"/>
    <property type="evidence" value="ECO:0007669"/>
    <property type="project" value="UniProtKB-UniRule"/>
</dbReference>
<dbReference type="FunFam" id="1.10.10.1250:FF:000001">
    <property type="entry name" value="Probable DNA-directed RNA polymerase subunit delta"/>
    <property type="match status" value="1"/>
</dbReference>
<dbReference type="Gene3D" id="1.10.10.1250">
    <property type="entry name" value="RNA polymerase, subunit delta, N-terminal domain"/>
    <property type="match status" value="1"/>
</dbReference>
<dbReference type="HAMAP" id="MF_00357">
    <property type="entry name" value="RNApol_bact_RpoE"/>
    <property type="match status" value="1"/>
</dbReference>
<dbReference type="InterPro" id="IPR007759">
    <property type="entry name" value="Asxl_HARE-HTH"/>
</dbReference>
<dbReference type="InterPro" id="IPR038087">
    <property type="entry name" value="RNAP_delta_N_dom_sf"/>
</dbReference>
<dbReference type="InterPro" id="IPR029757">
    <property type="entry name" value="RpoE"/>
</dbReference>
<dbReference type="NCBIfam" id="TIGR04567">
    <property type="entry name" value="RNAP_delt_lowGC"/>
    <property type="match status" value="1"/>
</dbReference>
<dbReference type="Pfam" id="PF05066">
    <property type="entry name" value="HARE-HTH"/>
    <property type="match status" value="1"/>
</dbReference>
<dbReference type="PROSITE" id="PS51913">
    <property type="entry name" value="HTH_HARE"/>
    <property type="match status" value="1"/>
</dbReference>
<organism>
    <name type="scientific">Bacillus cereus (strain G9842)</name>
    <dbReference type="NCBI Taxonomy" id="405531"/>
    <lineage>
        <taxon>Bacteria</taxon>
        <taxon>Bacillati</taxon>
        <taxon>Bacillota</taxon>
        <taxon>Bacilli</taxon>
        <taxon>Bacillales</taxon>
        <taxon>Bacillaceae</taxon>
        <taxon>Bacillus</taxon>
        <taxon>Bacillus cereus group</taxon>
    </lineage>
</organism>
<protein>
    <recommendedName>
        <fullName evidence="1">Probable DNA-directed RNA polymerase subunit delta</fullName>
    </recommendedName>
    <alternativeName>
        <fullName evidence="1">RNAP delta factor</fullName>
    </alternativeName>
</protein>
<keyword id="KW-0240">DNA-directed RNA polymerase</keyword>
<keyword id="KW-0548">Nucleotidyltransferase</keyword>
<keyword id="KW-0804">Transcription</keyword>
<keyword id="KW-0808">Transferase</keyword>
<evidence type="ECO:0000255" key="1">
    <source>
        <dbReference type="HAMAP-Rule" id="MF_00357"/>
    </source>
</evidence>
<evidence type="ECO:0000255" key="2">
    <source>
        <dbReference type="PROSITE-ProRule" id="PRU01261"/>
    </source>
</evidence>
<evidence type="ECO:0000256" key="3">
    <source>
        <dbReference type="SAM" id="MobiDB-lite"/>
    </source>
</evidence>
<gene>
    <name evidence="1" type="primary">rpoE</name>
    <name type="ordered locus">BCG9842_B5490</name>
</gene>
<reference key="1">
    <citation type="submission" date="2008-10" db="EMBL/GenBank/DDBJ databases">
        <title>Genome sequence of Bacillus cereus G9842.</title>
        <authorList>
            <person name="Dodson R.J."/>
            <person name="Durkin A.S."/>
            <person name="Rosovitz M.J."/>
            <person name="Rasko D.A."/>
            <person name="Hoffmaster A."/>
            <person name="Ravel J."/>
            <person name="Sutton G."/>
        </authorList>
    </citation>
    <scope>NUCLEOTIDE SEQUENCE [LARGE SCALE GENOMIC DNA]</scope>
    <source>
        <strain>G9842</strain>
    </source>
</reference>
<feature type="chain" id="PRO_1000120561" description="Probable DNA-directed RNA polymerase subunit delta">
    <location>
        <begin position="1"/>
        <end position="177"/>
    </location>
</feature>
<feature type="domain" description="HTH HARE-type" evidence="2">
    <location>
        <begin position="14"/>
        <end position="81"/>
    </location>
</feature>
<feature type="region of interest" description="Disordered" evidence="3">
    <location>
        <begin position="91"/>
        <end position="177"/>
    </location>
</feature>
<feature type="compositionally biased region" description="Acidic residues" evidence="3">
    <location>
        <begin position="106"/>
        <end position="177"/>
    </location>
</feature>